<comment type="function">
    <text evidence="1">Specifically methylates the uridine in position 2552 of 23S rRNA at the 2'-O position of the ribose in the fully assembled 50S ribosomal subunit.</text>
</comment>
<comment type="catalytic activity">
    <reaction evidence="1">
        <text>uridine(2552) in 23S rRNA + S-adenosyl-L-methionine = 2'-O-methyluridine(2552) in 23S rRNA + S-adenosyl-L-homocysteine + H(+)</text>
        <dbReference type="Rhea" id="RHEA:42720"/>
        <dbReference type="Rhea" id="RHEA-COMP:10202"/>
        <dbReference type="Rhea" id="RHEA-COMP:10203"/>
        <dbReference type="ChEBI" id="CHEBI:15378"/>
        <dbReference type="ChEBI" id="CHEBI:57856"/>
        <dbReference type="ChEBI" id="CHEBI:59789"/>
        <dbReference type="ChEBI" id="CHEBI:65315"/>
        <dbReference type="ChEBI" id="CHEBI:74478"/>
        <dbReference type="EC" id="2.1.1.166"/>
    </reaction>
</comment>
<comment type="subcellular location">
    <subcellularLocation>
        <location evidence="1">Cytoplasm</location>
    </subcellularLocation>
</comment>
<comment type="similarity">
    <text evidence="1">Belongs to the class I-like SAM-binding methyltransferase superfamily. RNA methyltransferase RlmE family.</text>
</comment>
<organism>
    <name type="scientific">Francisella tularensis subsp. tularensis (strain WY96-3418)</name>
    <dbReference type="NCBI Taxonomy" id="418136"/>
    <lineage>
        <taxon>Bacteria</taxon>
        <taxon>Pseudomonadati</taxon>
        <taxon>Pseudomonadota</taxon>
        <taxon>Gammaproteobacteria</taxon>
        <taxon>Thiotrichales</taxon>
        <taxon>Francisellaceae</taxon>
        <taxon>Francisella</taxon>
    </lineage>
</organism>
<proteinExistence type="inferred from homology"/>
<evidence type="ECO:0000255" key="1">
    <source>
        <dbReference type="HAMAP-Rule" id="MF_01547"/>
    </source>
</evidence>
<keyword id="KW-0963">Cytoplasm</keyword>
<keyword id="KW-0489">Methyltransferase</keyword>
<keyword id="KW-0698">rRNA processing</keyword>
<keyword id="KW-0949">S-adenosyl-L-methionine</keyword>
<keyword id="KW-0808">Transferase</keyword>
<protein>
    <recommendedName>
        <fullName evidence="1">Ribosomal RNA large subunit methyltransferase E</fullName>
        <ecNumber evidence="1">2.1.1.166</ecNumber>
    </recommendedName>
    <alternativeName>
        <fullName evidence="1">23S rRNA Um2552 methyltransferase</fullName>
    </alternativeName>
    <alternativeName>
        <fullName evidence="1">rRNA (uridine-2'-O-)-methyltransferase</fullName>
    </alternativeName>
</protein>
<sequence length="206" mass="23159">MSKGSSTKKWLHEHTSDYYVIQANKLGYRSRASFKILEIQDKYQLFKPNMFVVDLGAAPGGWSEQVIKYIGKNGKLIALDLLEMAPIAGVEFIQGDFSSDETYQKLNTLVNNQKIDCVISDMAPNLSGNKTSDQAKSIYLLELALDFANTNLNKNGSFVAKVFQGQGSDEYLKLVRESFNKVIQFKPKSSRAKSREFYVIATEFKG</sequence>
<name>RLME_FRATW</name>
<feature type="chain" id="PRO_0000300593" description="Ribosomal RNA large subunit methyltransferase E">
    <location>
        <begin position="1"/>
        <end position="206"/>
    </location>
</feature>
<feature type="active site" description="Proton acceptor" evidence="1">
    <location>
        <position position="161"/>
    </location>
</feature>
<feature type="binding site" evidence="1">
    <location>
        <position position="60"/>
    </location>
    <ligand>
        <name>S-adenosyl-L-methionine</name>
        <dbReference type="ChEBI" id="CHEBI:59789"/>
    </ligand>
</feature>
<feature type="binding site" evidence="1">
    <location>
        <position position="62"/>
    </location>
    <ligand>
        <name>S-adenosyl-L-methionine</name>
        <dbReference type="ChEBI" id="CHEBI:59789"/>
    </ligand>
</feature>
<feature type="binding site" evidence="1">
    <location>
        <position position="80"/>
    </location>
    <ligand>
        <name>S-adenosyl-L-methionine</name>
        <dbReference type="ChEBI" id="CHEBI:59789"/>
    </ligand>
</feature>
<feature type="binding site" evidence="1">
    <location>
        <position position="96"/>
    </location>
    <ligand>
        <name>S-adenosyl-L-methionine</name>
        <dbReference type="ChEBI" id="CHEBI:59789"/>
    </ligand>
</feature>
<feature type="binding site" evidence="1">
    <location>
        <position position="121"/>
    </location>
    <ligand>
        <name>S-adenosyl-L-methionine</name>
        <dbReference type="ChEBI" id="CHEBI:59789"/>
    </ligand>
</feature>
<gene>
    <name evidence="1" type="primary">rlmE</name>
    <name evidence="1" type="synonym">ftsJ</name>
    <name evidence="1" type="synonym">rrmJ</name>
    <name type="ordered locus">FTW_1267</name>
</gene>
<dbReference type="EC" id="2.1.1.166" evidence="1"/>
<dbReference type="EMBL" id="CP000608">
    <property type="protein sequence ID" value="ABO47045.1"/>
    <property type="molecule type" value="Genomic_DNA"/>
</dbReference>
<dbReference type="RefSeq" id="WP_003017870.1">
    <property type="nucleotide sequence ID" value="NC_009257.1"/>
</dbReference>
<dbReference type="SMR" id="A4IYP4"/>
<dbReference type="KEGG" id="ftw:FTW_1267"/>
<dbReference type="HOGENOM" id="CLU_009422_4_0_6"/>
<dbReference type="GO" id="GO:0005737">
    <property type="term" value="C:cytoplasm"/>
    <property type="evidence" value="ECO:0007669"/>
    <property type="project" value="UniProtKB-SubCell"/>
</dbReference>
<dbReference type="GO" id="GO:0008650">
    <property type="term" value="F:rRNA (uridine-2'-O-)-methyltransferase activity"/>
    <property type="evidence" value="ECO:0007669"/>
    <property type="project" value="UniProtKB-UniRule"/>
</dbReference>
<dbReference type="FunFam" id="3.40.50.150:FF:000005">
    <property type="entry name" value="Ribosomal RNA large subunit methyltransferase E"/>
    <property type="match status" value="1"/>
</dbReference>
<dbReference type="Gene3D" id="3.40.50.150">
    <property type="entry name" value="Vaccinia Virus protein VP39"/>
    <property type="match status" value="1"/>
</dbReference>
<dbReference type="HAMAP" id="MF_01547">
    <property type="entry name" value="RNA_methyltr_E"/>
    <property type="match status" value="1"/>
</dbReference>
<dbReference type="InterPro" id="IPR050082">
    <property type="entry name" value="RNA_methyltr_RlmE"/>
</dbReference>
<dbReference type="InterPro" id="IPR002877">
    <property type="entry name" value="RNA_MeTrfase_FtsJ_dom"/>
</dbReference>
<dbReference type="InterPro" id="IPR015507">
    <property type="entry name" value="rRNA-MeTfrase_E"/>
</dbReference>
<dbReference type="InterPro" id="IPR029063">
    <property type="entry name" value="SAM-dependent_MTases_sf"/>
</dbReference>
<dbReference type="NCBIfam" id="NF008390">
    <property type="entry name" value="PRK11188.1"/>
    <property type="match status" value="1"/>
</dbReference>
<dbReference type="PANTHER" id="PTHR10920">
    <property type="entry name" value="RIBOSOMAL RNA METHYLTRANSFERASE"/>
    <property type="match status" value="1"/>
</dbReference>
<dbReference type="PANTHER" id="PTHR10920:SF18">
    <property type="entry name" value="RRNA METHYLTRANSFERASE 2, MITOCHONDRIAL"/>
    <property type="match status" value="1"/>
</dbReference>
<dbReference type="Pfam" id="PF01728">
    <property type="entry name" value="FtsJ"/>
    <property type="match status" value="1"/>
</dbReference>
<dbReference type="PIRSF" id="PIRSF005461">
    <property type="entry name" value="23S_rRNA_mtase"/>
    <property type="match status" value="1"/>
</dbReference>
<dbReference type="SUPFAM" id="SSF53335">
    <property type="entry name" value="S-adenosyl-L-methionine-dependent methyltransferases"/>
    <property type="match status" value="1"/>
</dbReference>
<reference key="1">
    <citation type="journal article" date="2007" name="PLoS ONE">
        <title>Complete genomic characterization of a pathogenic A.II strain of Francisella tularensis subspecies tularensis.</title>
        <authorList>
            <person name="Beckstrom-Sternberg S.M."/>
            <person name="Auerbach R.K."/>
            <person name="Godbole S."/>
            <person name="Pearson J.V."/>
            <person name="Beckstrom-Sternberg J.S."/>
            <person name="Deng Z."/>
            <person name="Munk C."/>
            <person name="Kubota K."/>
            <person name="Zhou Y."/>
            <person name="Bruce D."/>
            <person name="Noronha J."/>
            <person name="Scheuermann R.H."/>
            <person name="Wang A."/>
            <person name="Wei X."/>
            <person name="Wang J."/>
            <person name="Hao J."/>
            <person name="Wagner D.M."/>
            <person name="Brettin T.S."/>
            <person name="Brown N."/>
            <person name="Gilna P."/>
            <person name="Keim P.S."/>
        </authorList>
    </citation>
    <scope>NUCLEOTIDE SEQUENCE [LARGE SCALE GENOMIC DNA]</scope>
    <source>
        <strain>WY96-3418</strain>
    </source>
</reference>
<accession>A4IYP4</accession>